<protein>
    <recommendedName>
        <fullName evidence="1">Haloalkane dehalogenase</fullName>
        <ecNumber evidence="1">3.8.1.5</ecNumber>
    </recommendedName>
</protein>
<keyword id="KW-0378">Hydrolase</keyword>
<keyword id="KW-1185">Reference proteome</keyword>
<comment type="function">
    <text evidence="1">Catalyzes hydrolytic cleavage of carbon-halogen bonds in halogenated aliphatic compounds, leading to the formation of the corresponding primary alcohols, halide ions and protons.</text>
</comment>
<comment type="catalytic activity">
    <reaction evidence="1">
        <text>1-haloalkane + H2O = a halide anion + a primary alcohol + H(+)</text>
        <dbReference type="Rhea" id="RHEA:19081"/>
        <dbReference type="ChEBI" id="CHEBI:15377"/>
        <dbReference type="ChEBI" id="CHEBI:15378"/>
        <dbReference type="ChEBI" id="CHEBI:15734"/>
        <dbReference type="ChEBI" id="CHEBI:16042"/>
        <dbReference type="ChEBI" id="CHEBI:18060"/>
        <dbReference type="EC" id="3.8.1.5"/>
    </reaction>
</comment>
<comment type="subunit">
    <text evidence="1">Monomer.</text>
</comment>
<comment type="similarity">
    <text evidence="1">Belongs to the haloalkane dehalogenase family. Type 1 subfamily.</text>
</comment>
<proteinExistence type="inferred from homology"/>
<sequence length="301" mass="32843">MQVLRTPDERFEGLADWPFAPKYVQVKDADGTLLRIHHVDEGPRDGAPVLLMHGEPSWAYLYRHIIPRLVAAGHRAIAPDLVGFGRSDKPADRGDYTYARHVAWMSAWLEAVDLRGAYLFCQDWGGLIGLRLVAAYPERFAGVVVSNTGLPVGGGAMTDGFKAWLQFSQTVPELPIGFLLNGGSVRELSAAEMAAYDAPFPDESYKEGARQFPALVPVTSEHAGVAENQAAWKVLEAWDKPLVTAFSDGDPITKGGEVPFRERVPGARGQPHVTLHGGHFVQEDSPAEIAGLLDGLIRRSR</sequence>
<accession>B4RF90</accession>
<feature type="chain" id="PRO_1000139632" description="Haloalkane dehalogenase">
    <location>
        <begin position="1"/>
        <end position="301"/>
    </location>
</feature>
<feature type="active site" description="Nucleophile" evidence="1">
    <location>
        <position position="123"/>
    </location>
</feature>
<feature type="active site" description="Proton donor" evidence="1">
    <location>
        <position position="250"/>
    </location>
</feature>
<feature type="active site" description="Proton acceptor" evidence="1">
    <location>
        <position position="279"/>
    </location>
</feature>
<name>DHMA_PHEZH</name>
<gene>
    <name evidence="1" type="primary">dhmA</name>
    <name type="ordered locus">PHZ_c2250</name>
</gene>
<evidence type="ECO:0000255" key="1">
    <source>
        <dbReference type="HAMAP-Rule" id="MF_01230"/>
    </source>
</evidence>
<dbReference type="EC" id="3.8.1.5" evidence="1"/>
<dbReference type="EMBL" id="CP000747">
    <property type="protein sequence ID" value="ACG78660.1"/>
    <property type="molecule type" value="Genomic_DNA"/>
</dbReference>
<dbReference type="RefSeq" id="WP_012522801.1">
    <property type="nucleotide sequence ID" value="NC_011144.1"/>
</dbReference>
<dbReference type="SMR" id="B4RF90"/>
<dbReference type="STRING" id="450851.PHZ_c2250"/>
<dbReference type="ESTHER" id="phezh-dhma">
    <property type="family name" value="Haloalkane_dehalogenase-HLD1"/>
</dbReference>
<dbReference type="KEGG" id="pzu:PHZ_c2250"/>
<dbReference type="eggNOG" id="COG0596">
    <property type="taxonomic scope" value="Bacteria"/>
</dbReference>
<dbReference type="HOGENOM" id="CLU_020336_13_3_5"/>
<dbReference type="OrthoDB" id="9804723at2"/>
<dbReference type="Proteomes" id="UP000001868">
    <property type="component" value="Chromosome"/>
</dbReference>
<dbReference type="GO" id="GO:0018786">
    <property type="term" value="F:haloalkane dehalogenase activity"/>
    <property type="evidence" value="ECO:0007669"/>
    <property type="project" value="UniProtKB-UniRule"/>
</dbReference>
<dbReference type="Gene3D" id="3.40.50.1820">
    <property type="entry name" value="alpha/beta hydrolase"/>
    <property type="match status" value="1"/>
</dbReference>
<dbReference type="HAMAP" id="MF_01230">
    <property type="entry name" value="Haloalk_dehal_type1"/>
    <property type="match status" value="1"/>
</dbReference>
<dbReference type="InterPro" id="IPR000073">
    <property type="entry name" value="AB_hydrolase_1"/>
</dbReference>
<dbReference type="InterPro" id="IPR029058">
    <property type="entry name" value="AB_hydrolase_fold"/>
</dbReference>
<dbReference type="InterPro" id="IPR000639">
    <property type="entry name" value="Epox_hydrolase-like"/>
</dbReference>
<dbReference type="InterPro" id="IPR023489">
    <property type="entry name" value="Haloalkane_dehalogenase_1"/>
</dbReference>
<dbReference type="NCBIfam" id="NF002043">
    <property type="entry name" value="PRK00870.1"/>
    <property type="match status" value="1"/>
</dbReference>
<dbReference type="PANTHER" id="PTHR43329">
    <property type="entry name" value="EPOXIDE HYDROLASE"/>
    <property type="match status" value="1"/>
</dbReference>
<dbReference type="Pfam" id="PF00561">
    <property type="entry name" value="Abhydrolase_1"/>
    <property type="match status" value="1"/>
</dbReference>
<dbReference type="PRINTS" id="PR00111">
    <property type="entry name" value="ABHYDROLASE"/>
</dbReference>
<dbReference type="PRINTS" id="PR00412">
    <property type="entry name" value="EPOXHYDRLASE"/>
</dbReference>
<dbReference type="SUPFAM" id="SSF53474">
    <property type="entry name" value="alpha/beta-Hydrolases"/>
    <property type="match status" value="1"/>
</dbReference>
<organism>
    <name type="scientific">Phenylobacterium zucineum (strain HLK1)</name>
    <dbReference type="NCBI Taxonomy" id="450851"/>
    <lineage>
        <taxon>Bacteria</taxon>
        <taxon>Pseudomonadati</taxon>
        <taxon>Pseudomonadota</taxon>
        <taxon>Alphaproteobacteria</taxon>
        <taxon>Caulobacterales</taxon>
        <taxon>Caulobacteraceae</taxon>
        <taxon>Phenylobacterium</taxon>
    </lineage>
</organism>
<reference key="1">
    <citation type="journal article" date="2008" name="BMC Genomics">
        <title>Complete genome of Phenylobacterium zucineum - a novel facultative intracellular bacterium isolated from human erythroleukemia cell line K562.</title>
        <authorList>
            <person name="Luo Y."/>
            <person name="Xu X."/>
            <person name="Ding Z."/>
            <person name="Liu Z."/>
            <person name="Zhang B."/>
            <person name="Yan Z."/>
            <person name="Sun J."/>
            <person name="Hu S."/>
            <person name="Hu X."/>
        </authorList>
    </citation>
    <scope>NUCLEOTIDE SEQUENCE [LARGE SCALE GENOMIC DNA]</scope>
    <source>
        <strain>HLK1</strain>
    </source>
</reference>